<organism>
    <name type="scientific">Zymomonas mobilis subsp. mobilis (strain ATCC 31821 / ZM4 / CP4)</name>
    <dbReference type="NCBI Taxonomy" id="264203"/>
    <lineage>
        <taxon>Bacteria</taxon>
        <taxon>Pseudomonadati</taxon>
        <taxon>Pseudomonadota</taxon>
        <taxon>Alphaproteobacteria</taxon>
        <taxon>Sphingomonadales</taxon>
        <taxon>Zymomonadaceae</taxon>
        <taxon>Zymomonas</taxon>
    </lineage>
</organism>
<sequence length="516" mass="58524">MAKPSAPVLFFNSLSKKIENFTPIDPERVRLYSCGPTVYNFAHLGNLRAYVFTDSLRRMLNWKGYPVNHVINITDVGHLTSDSDTGDDKMEAAAHKAQKTIWDVARFYTEAFWSDLKNLNIFNPTIWSIATDHIEDMIAFARKIEEAGFTYQLDSGLYFDTSRLKEYGLLAGHREAEGVGRIETVAGKKHPADFALWRRSSPDEKRQMEWISPWGPGAPGWHLECSVMSMKYLGEQFDIHTGGIDHREIHHCNEIAQNQAFTGDQQKTGANFWLHNNFLVDRSGKMSKSKGSFLTLSTLIEAGIHPLAYRVLCLSAHYRSELEFSPDNILAALTRLKRLVIAVGQLKKKVQKKVVADGEPDWLRAFDERSFSKGAPLDYQRGLIEAPLKKEALAILERFDQAVSNDLMLPQALPLLEETLGNKKLQPEEQLRLIASMDMILGLNLLHLDRASLNIRPKNASLQENNVLALLEERQLKRKEKDFAASDAIRNRLSEAGIDVLDGDPLGWEWRPEWNA</sequence>
<name>SYC_ZYMMO</name>
<evidence type="ECO:0000255" key="1">
    <source>
        <dbReference type="HAMAP-Rule" id="MF_00041"/>
    </source>
</evidence>
<gene>
    <name evidence="1" type="primary">cysS</name>
    <name type="ordered locus">ZMO0186</name>
</gene>
<protein>
    <recommendedName>
        <fullName evidence="1">Cysteine--tRNA ligase</fullName>
        <ecNumber evidence="1">6.1.1.16</ecNumber>
    </recommendedName>
    <alternativeName>
        <fullName evidence="1">Cysteinyl-tRNA synthetase</fullName>
        <shortName evidence="1">CysRS</shortName>
    </alternativeName>
</protein>
<proteinExistence type="inferred from homology"/>
<feature type="chain" id="PRO_0000159531" description="Cysteine--tRNA ligase">
    <location>
        <begin position="1"/>
        <end position="516"/>
    </location>
</feature>
<feature type="short sequence motif" description="'HIGH' region">
    <location>
        <begin position="36"/>
        <end position="46"/>
    </location>
</feature>
<feature type="short sequence motif" description="'KMSKS' region">
    <location>
        <begin position="285"/>
        <end position="289"/>
    </location>
</feature>
<feature type="binding site" evidence="1">
    <location>
        <position position="34"/>
    </location>
    <ligand>
        <name>Zn(2+)</name>
        <dbReference type="ChEBI" id="CHEBI:29105"/>
    </ligand>
</feature>
<feature type="binding site" evidence="1">
    <location>
        <position position="225"/>
    </location>
    <ligand>
        <name>Zn(2+)</name>
        <dbReference type="ChEBI" id="CHEBI:29105"/>
    </ligand>
</feature>
<feature type="binding site" evidence="1">
    <location>
        <position position="250"/>
    </location>
    <ligand>
        <name>Zn(2+)</name>
        <dbReference type="ChEBI" id="CHEBI:29105"/>
    </ligand>
</feature>
<feature type="binding site" evidence="1">
    <location>
        <position position="254"/>
    </location>
    <ligand>
        <name>Zn(2+)</name>
        <dbReference type="ChEBI" id="CHEBI:29105"/>
    </ligand>
</feature>
<feature type="binding site" evidence="1">
    <location>
        <position position="288"/>
    </location>
    <ligand>
        <name>ATP</name>
        <dbReference type="ChEBI" id="CHEBI:30616"/>
    </ligand>
</feature>
<comment type="catalytic activity">
    <reaction evidence="1">
        <text>tRNA(Cys) + L-cysteine + ATP = L-cysteinyl-tRNA(Cys) + AMP + diphosphate</text>
        <dbReference type="Rhea" id="RHEA:17773"/>
        <dbReference type="Rhea" id="RHEA-COMP:9661"/>
        <dbReference type="Rhea" id="RHEA-COMP:9679"/>
        <dbReference type="ChEBI" id="CHEBI:30616"/>
        <dbReference type="ChEBI" id="CHEBI:33019"/>
        <dbReference type="ChEBI" id="CHEBI:35235"/>
        <dbReference type="ChEBI" id="CHEBI:78442"/>
        <dbReference type="ChEBI" id="CHEBI:78517"/>
        <dbReference type="ChEBI" id="CHEBI:456215"/>
        <dbReference type="EC" id="6.1.1.16"/>
    </reaction>
</comment>
<comment type="cofactor">
    <cofactor evidence="1">
        <name>Zn(2+)</name>
        <dbReference type="ChEBI" id="CHEBI:29105"/>
    </cofactor>
    <text evidence="1">Binds 1 zinc ion per subunit.</text>
</comment>
<comment type="subunit">
    <text evidence="1">Monomer.</text>
</comment>
<comment type="subcellular location">
    <subcellularLocation>
        <location evidence="1">Cytoplasm</location>
    </subcellularLocation>
</comment>
<comment type="similarity">
    <text evidence="1">Belongs to the class-I aminoacyl-tRNA synthetase family.</text>
</comment>
<reference key="1">
    <citation type="journal article" date="2005" name="Nat. Biotechnol.">
        <title>The genome sequence of the ethanologenic bacterium Zymomonas mobilis ZM4.</title>
        <authorList>
            <person name="Seo J.-S."/>
            <person name="Chong H."/>
            <person name="Park H.S."/>
            <person name="Yoon K.-O."/>
            <person name="Jung C."/>
            <person name="Kim J.J."/>
            <person name="Hong J.H."/>
            <person name="Kim H."/>
            <person name="Kim J.-H."/>
            <person name="Kil J.-I."/>
            <person name="Park C.J."/>
            <person name="Oh H.-M."/>
            <person name="Lee J.-S."/>
            <person name="Jin S.-J."/>
            <person name="Um H.-W."/>
            <person name="Lee H.-J."/>
            <person name="Oh S.-J."/>
            <person name="Kim J.Y."/>
            <person name="Kang H.L."/>
            <person name="Lee S.Y."/>
            <person name="Lee K.J."/>
            <person name="Kang H.S."/>
        </authorList>
    </citation>
    <scope>NUCLEOTIDE SEQUENCE [LARGE SCALE GENOMIC DNA]</scope>
    <source>
        <strain>ATCC 31821 / ZM4 / CP4</strain>
    </source>
</reference>
<keyword id="KW-0030">Aminoacyl-tRNA synthetase</keyword>
<keyword id="KW-0067">ATP-binding</keyword>
<keyword id="KW-0963">Cytoplasm</keyword>
<keyword id="KW-0436">Ligase</keyword>
<keyword id="KW-0479">Metal-binding</keyword>
<keyword id="KW-0547">Nucleotide-binding</keyword>
<keyword id="KW-0648">Protein biosynthesis</keyword>
<keyword id="KW-1185">Reference proteome</keyword>
<keyword id="KW-0862">Zinc</keyword>
<accession>Q5NR44</accession>
<dbReference type="EC" id="6.1.1.16" evidence="1"/>
<dbReference type="EMBL" id="AE008692">
    <property type="protein sequence ID" value="AAV88810.1"/>
    <property type="molecule type" value="Genomic_DNA"/>
</dbReference>
<dbReference type="RefSeq" id="WP_011240139.1">
    <property type="nucleotide sequence ID" value="NZ_CP035711.1"/>
</dbReference>
<dbReference type="SMR" id="Q5NR44"/>
<dbReference type="STRING" id="264203.ZMO0186"/>
<dbReference type="KEGG" id="zmo:ZMO0186"/>
<dbReference type="eggNOG" id="COG0215">
    <property type="taxonomic scope" value="Bacteria"/>
</dbReference>
<dbReference type="HOGENOM" id="CLU_013528_0_1_5"/>
<dbReference type="Proteomes" id="UP000001173">
    <property type="component" value="Chromosome"/>
</dbReference>
<dbReference type="GO" id="GO:0005829">
    <property type="term" value="C:cytosol"/>
    <property type="evidence" value="ECO:0007669"/>
    <property type="project" value="TreeGrafter"/>
</dbReference>
<dbReference type="GO" id="GO:0005524">
    <property type="term" value="F:ATP binding"/>
    <property type="evidence" value="ECO:0007669"/>
    <property type="project" value="UniProtKB-UniRule"/>
</dbReference>
<dbReference type="GO" id="GO:0004817">
    <property type="term" value="F:cysteine-tRNA ligase activity"/>
    <property type="evidence" value="ECO:0007669"/>
    <property type="project" value="UniProtKB-UniRule"/>
</dbReference>
<dbReference type="GO" id="GO:0008270">
    <property type="term" value="F:zinc ion binding"/>
    <property type="evidence" value="ECO:0007669"/>
    <property type="project" value="UniProtKB-UniRule"/>
</dbReference>
<dbReference type="GO" id="GO:0006423">
    <property type="term" value="P:cysteinyl-tRNA aminoacylation"/>
    <property type="evidence" value="ECO:0007669"/>
    <property type="project" value="UniProtKB-UniRule"/>
</dbReference>
<dbReference type="CDD" id="cd00672">
    <property type="entry name" value="CysRS_core"/>
    <property type="match status" value="1"/>
</dbReference>
<dbReference type="Gene3D" id="1.20.120.1910">
    <property type="entry name" value="Cysteine-tRNA ligase, C-terminal anti-codon recognition domain"/>
    <property type="match status" value="1"/>
</dbReference>
<dbReference type="Gene3D" id="3.40.50.620">
    <property type="entry name" value="HUPs"/>
    <property type="match status" value="1"/>
</dbReference>
<dbReference type="HAMAP" id="MF_00041">
    <property type="entry name" value="Cys_tRNA_synth"/>
    <property type="match status" value="1"/>
</dbReference>
<dbReference type="InterPro" id="IPR015803">
    <property type="entry name" value="Cys-tRNA-ligase"/>
</dbReference>
<dbReference type="InterPro" id="IPR024909">
    <property type="entry name" value="Cys-tRNA/MSH_ligase"/>
</dbReference>
<dbReference type="InterPro" id="IPR014729">
    <property type="entry name" value="Rossmann-like_a/b/a_fold"/>
</dbReference>
<dbReference type="InterPro" id="IPR032678">
    <property type="entry name" value="tRNA-synt_1_cat_dom"/>
</dbReference>
<dbReference type="InterPro" id="IPR009080">
    <property type="entry name" value="tRNAsynth_Ia_anticodon-bd"/>
</dbReference>
<dbReference type="NCBIfam" id="TIGR00435">
    <property type="entry name" value="cysS"/>
    <property type="match status" value="1"/>
</dbReference>
<dbReference type="PANTHER" id="PTHR10890:SF3">
    <property type="entry name" value="CYSTEINE--TRNA LIGASE, CYTOPLASMIC"/>
    <property type="match status" value="1"/>
</dbReference>
<dbReference type="PANTHER" id="PTHR10890">
    <property type="entry name" value="CYSTEINYL-TRNA SYNTHETASE"/>
    <property type="match status" value="1"/>
</dbReference>
<dbReference type="Pfam" id="PF01406">
    <property type="entry name" value="tRNA-synt_1e"/>
    <property type="match status" value="1"/>
</dbReference>
<dbReference type="PRINTS" id="PR00983">
    <property type="entry name" value="TRNASYNTHCYS"/>
</dbReference>
<dbReference type="SUPFAM" id="SSF47323">
    <property type="entry name" value="Anticodon-binding domain of a subclass of class I aminoacyl-tRNA synthetases"/>
    <property type="match status" value="1"/>
</dbReference>
<dbReference type="SUPFAM" id="SSF52374">
    <property type="entry name" value="Nucleotidylyl transferase"/>
    <property type="match status" value="1"/>
</dbReference>